<evidence type="ECO:0000255" key="1">
    <source>
        <dbReference type="HAMAP-Rule" id="MF_01962"/>
    </source>
</evidence>
<reference key="1">
    <citation type="submission" date="2007-06" db="EMBL/GenBank/DDBJ databases">
        <authorList>
            <person name="Dodson R.J."/>
            <person name="Harkins D."/>
            <person name="Paulsen I.T."/>
        </authorList>
    </citation>
    <scope>NUCLEOTIDE SEQUENCE [LARGE SCALE GENOMIC DNA]</scope>
    <source>
        <strain>DSM 24068 / PA7</strain>
    </source>
</reference>
<comment type="function">
    <text evidence="1">Catalyzes the hydrolytic deamination of adenine to hypoxanthine. Plays an important role in the purine salvage pathway and in nitrogen catabolism.</text>
</comment>
<comment type="catalytic activity">
    <reaction evidence="1">
        <text>adenine + H2O + H(+) = hypoxanthine + NH4(+)</text>
        <dbReference type="Rhea" id="RHEA:23688"/>
        <dbReference type="ChEBI" id="CHEBI:15377"/>
        <dbReference type="ChEBI" id="CHEBI:15378"/>
        <dbReference type="ChEBI" id="CHEBI:16708"/>
        <dbReference type="ChEBI" id="CHEBI:17368"/>
        <dbReference type="ChEBI" id="CHEBI:28938"/>
        <dbReference type="EC" id="3.5.4.2"/>
    </reaction>
</comment>
<comment type="cofactor">
    <cofactor evidence="1">
        <name>Zn(2+)</name>
        <dbReference type="ChEBI" id="CHEBI:29105"/>
    </cofactor>
    <text evidence="1">Binds 1 zinc ion per subunit.</text>
</comment>
<comment type="similarity">
    <text evidence="1">Belongs to the metallo-dependent hydrolases superfamily. Adenosine and AMP deaminases family. Adenine deaminase type 2 subfamily.</text>
</comment>
<protein>
    <recommendedName>
        <fullName evidence="1">Adenine deaminase</fullName>
        <shortName evidence="1">ADE</shortName>
        <ecNumber evidence="1">3.5.4.2</ecNumber>
    </recommendedName>
    <alternativeName>
        <fullName evidence="1">Adenine aminohydrolase</fullName>
        <shortName evidence="1">AAH</shortName>
    </alternativeName>
</protein>
<dbReference type="EC" id="3.5.4.2" evidence="1"/>
<dbReference type="EMBL" id="CP000744">
    <property type="protein sequence ID" value="ABR83229.1"/>
    <property type="molecule type" value="Genomic_DNA"/>
</dbReference>
<dbReference type="RefSeq" id="WP_011979187.1">
    <property type="nucleotide sequence ID" value="NC_009656.1"/>
</dbReference>
<dbReference type="SMR" id="A6UXT7"/>
<dbReference type="KEGG" id="pap:PSPA7_0226"/>
<dbReference type="HOGENOM" id="CLU_039228_7_0_6"/>
<dbReference type="Proteomes" id="UP000001582">
    <property type="component" value="Chromosome"/>
</dbReference>
<dbReference type="GO" id="GO:0005829">
    <property type="term" value="C:cytosol"/>
    <property type="evidence" value="ECO:0007669"/>
    <property type="project" value="TreeGrafter"/>
</dbReference>
<dbReference type="GO" id="GO:0000034">
    <property type="term" value="F:adenine deaminase activity"/>
    <property type="evidence" value="ECO:0007669"/>
    <property type="project" value="UniProtKB-UniRule"/>
</dbReference>
<dbReference type="GO" id="GO:0008270">
    <property type="term" value="F:zinc ion binding"/>
    <property type="evidence" value="ECO:0007669"/>
    <property type="project" value="UniProtKB-UniRule"/>
</dbReference>
<dbReference type="GO" id="GO:0006146">
    <property type="term" value="P:adenine catabolic process"/>
    <property type="evidence" value="ECO:0007669"/>
    <property type="project" value="UniProtKB-UniRule"/>
</dbReference>
<dbReference type="GO" id="GO:0043103">
    <property type="term" value="P:hypoxanthine salvage"/>
    <property type="evidence" value="ECO:0007669"/>
    <property type="project" value="UniProtKB-UniRule"/>
</dbReference>
<dbReference type="GO" id="GO:0009117">
    <property type="term" value="P:nucleotide metabolic process"/>
    <property type="evidence" value="ECO:0007669"/>
    <property type="project" value="UniProtKB-KW"/>
</dbReference>
<dbReference type="CDD" id="cd01320">
    <property type="entry name" value="ADA"/>
    <property type="match status" value="1"/>
</dbReference>
<dbReference type="FunFam" id="3.20.20.140:FF:000039">
    <property type="entry name" value="Adenine deaminase"/>
    <property type="match status" value="1"/>
</dbReference>
<dbReference type="Gene3D" id="3.20.20.140">
    <property type="entry name" value="Metal-dependent hydrolases"/>
    <property type="match status" value="1"/>
</dbReference>
<dbReference type="HAMAP" id="MF_01962">
    <property type="entry name" value="Adenine_deaminase"/>
    <property type="match status" value="1"/>
</dbReference>
<dbReference type="InterPro" id="IPR001365">
    <property type="entry name" value="A_deaminase_dom"/>
</dbReference>
<dbReference type="InterPro" id="IPR028892">
    <property type="entry name" value="ADE"/>
</dbReference>
<dbReference type="InterPro" id="IPR006330">
    <property type="entry name" value="Ado/ade_deaminase"/>
</dbReference>
<dbReference type="InterPro" id="IPR032466">
    <property type="entry name" value="Metal_Hydrolase"/>
</dbReference>
<dbReference type="NCBIfam" id="TIGR01430">
    <property type="entry name" value="aden_deam"/>
    <property type="match status" value="1"/>
</dbReference>
<dbReference type="NCBIfam" id="NF006850">
    <property type="entry name" value="PRK09358.1-6"/>
    <property type="match status" value="1"/>
</dbReference>
<dbReference type="PANTHER" id="PTHR43114">
    <property type="entry name" value="ADENINE DEAMINASE"/>
    <property type="match status" value="1"/>
</dbReference>
<dbReference type="PANTHER" id="PTHR43114:SF6">
    <property type="entry name" value="ADENINE DEAMINASE"/>
    <property type="match status" value="1"/>
</dbReference>
<dbReference type="Pfam" id="PF00962">
    <property type="entry name" value="A_deaminase"/>
    <property type="match status" value="1"/>
</dbReference>
<dbReference type="SUPFAM" id="SSF51556">
    <property type="entry name" value="Metallo-dependent hydrolases"/>
    <property type="match status" value="1"/>
</dbReference>
<feature type="chain" id="PRO_1000017677" description="Adenine deaminase">
    <location>
        <begin position="1"/>
        <end position="316"/>
    </location>
</feature>
<feature type="active site" description="Proton donor" evidence="1">
    <location>
        <position position="197"/>
    </location>
</feature>
<feature type="binding site" evidence="1">
    <location>
        <position position="14"/>
    </location>
    <ligand>
        <name>Zn(2+)</name>
        <dbReference type="ChEBI" id="CHEBI:29105"/>
        <note>catalytic</note>
    </ligand>
</feature>
<feature type="binding site" evidence="1">
    <location>
        <position position="16"/>
    </location>
    <ligand>
        <name>Zn(2+)</name>
        <dbReference type="ChEBI" id="CHEBI:29105"/>
        <note>catalytic</note>
    </ligand>
</feature>
<feature type="binding site" evidence="1">
    <location>
        <position position="194"/>
    </location>
    <ligand>
        <name>Zn(2+)</name>
        <dbReference type="ChEBI" id="CHEBI:29105"/>
        <note>catalytic</note>
    </ligand>
</feature>
<feature type="binding site" evidence="1">
    <location>
        <position position="275"/>
    </location>
    <ligand>
        <name>Zn(2+)</name>
        <dbReference type="ChEBI" id="CHEBI:29105"/>
        <note>catalytic</note>
    </ligand>
</feature>
<feature type="binding site" evidence="1">
    <location>
        <position position="276"/>
    </location>
    <ligand>
        <name>substrate</name>
    </ligand>
</feature>
<feature type="site" description="Important for catalytic activity" evidence="1">
    <location>
        <position position="218"/>
    </location>
</feature>
<gene>
    <name type="ordered locus">PSPA7_0226</name>
</gene>
<sequence length="316" mass="36220">MYEWLNALPKAELHLHLEGTLEPELLFALAERNRIALPWNDVETLRKAYAFNNLQEFLDLYYAGADVLRSEQDFYDLTWAYLQKCKAQNVVHVEPFFDPQTHTDRGIPFEVVLAGIRAALRDGEKQLGIRHGLILSFLRHLSEEEAQKTLDQALPFRDAFVAVGLDSSEVGHPPRKFQRVFDRARSEGFLTVAHAGEEGPPEYIWEALDLLKVERIDHGVRAFEDERLMRRLIDEQIPLTVCPLSNTKLCVFDDMSQHTILDMLERGVKVTVNSDDPAYFGGYVTENFHALQQSLGMTEEQARRLAQNSLDARLVK</sequence>
<keyword id="KW-0378">Hydrolase</keyword>
<keyword id="KW-0479">Metal-binding</keyword>
<keyword id="KW-0546">Nucleotide metabolism</keyword>
<keyword id="KW-0862">Zinc</keyword>
<proteinExistence type="inferred from homology"/>
<accession>A6UXT7</accession>
<organism>
    <name type="scientific">Pseudomonas paraeruginosa (strain DSM 24068 / PA7)</name>
    <name type="common">Pseudomonas aeruginosa (strain PA7)</name>
    <dbReference type="NCBI Taxonomy" id="381754"/>
    <lineage>
        <taxon>Bacteria</taxon>
        <taxon>Pseudomonadati</taxon>
        <taxon>Pseudomonadota</taxon>
        <taxon>Gammaproteobacteria</taxon>
        <taxon>Pseudomonadales</taxon>
        <taxon>Pseudomonadaceae</taxon>
        <taxon>Pseudomonas</taxon>
        <taxon>Pseudomonas paraeruginosa</taxon>
    </lineage>
</organism>
<name>ADE_PSEP7</name>